<reference key="1">
    <citation type="journal article" date="1998" name="Science">
        <title>Genome sequence of an obligate intracellular pathogen of humans: Chlamydia trachomatis.</title>
        <authorList>
            <person name="Stephens R.S."/>
            <person name="Kalman S."/>
            <person name="Lammel C.J."/>
            <person name="Fan J."/>
            <person name="Marathe R."/>
            <person name="Aravind L."/>
            <person name="Mitchell W.P."/>
            <person name="Olinger L."/>
            <person name="Tatusov R.L."/>
            <person name="Zhao Q."/>
            <person name="Koonin E.V."/>
            <person name="Davis R.W."/>
        </authorList>
    </citation>
    <scope>NUCLEOTIDE SEQUENCE [LARGE SCALE GENOMIC DNA]</scope>
    <source>
        <strain>ATCC VR-885 / DSM 19411 / UW-3/Cx</strain>
    </source>
</reference>
<sequence>MKKLLREASEYLLSRGIRFPQREAEDILMDLLEISSRSALHQAKLSSEEQSLYWKRLRKRGDRCPTAYIHGKVHFLGVELQVTPQVLIPRQETEIFVEQIIGYLQMHKEKTTFYDVCCGSGCIGLAVRKHCPHVRVTLSDISPEALAIAESNARSNALAVDFLLGDLFDPFSFPADVLVCNPPYLSYKEFFESDPEVRCHEPWKALVGGVSGLEFYHRIATHIHKILVSGGVGWLEIGSTQGEDIKQIFHAKGIRGRVLKDYAQLDRFFFLENQANDAVSSGEVSGFSER</sequence>
<gene>
    <name evidence="1" type="primary">prmC</name>
    <name type="ordered locus">CT_024</name>
</gene>
<comment type="function">
    <text evidence="1">Methylates the class 1 translation termination release factors RF1/PrfA and RF2/PrfB on the glutamine residue of the universally conserved GGQ motif.</text>
</comment>
<comment type="catalytic activity">
    <reaction evidence="1">
        <text>L-glutaminyl-[peptide chain release factor] + S-adenosyl-L-methionine = N(5)-methyl-L-glutaminyl-[peptide chain release factor] + S-adenosyl-L-homocysteine + H(+)</text>
        <dbReference type="Rhea" id="RHEA:42896"/>
        <dbReference type="Rhea" id="RHEA-COMP:10271"/>
        <dbReference type="Rhea" id="RHEA-COMP:10272"/>
        <dbReference type="ChEBI" id="CHEBI:15378"/>
        <dbReference type="ChEBI" id="CHEBI:30011"/>
        <dbReference type="ChEBI" id="CHEBI:57856"/>
        <dbReference type="ChEBI" id="CHEBI:59789"/>
        <dbReference type="ChEBI" id="CHEBI:61891"/>
        <dbReference type="EC" id="2.1.1.297"/>
    </reaction>
</comment>
<comment type="similarity">
    <text evidence="1">Belongs to the protein N5-glutamine methyltransferase family. PrmC subfamily.</text>
</comment>
<evidence type="ECO:0000255" key="1">
    <source>
        <dbReference type="HAMAP-Rule" id="MF_02126"/>
    </source>
</evidence>
<accession>O84027</accession>
<keyword id="KW-0489">Methyltransferase</keyword>
<keyword id="KW-1185">Reference proteome</keyword>
<keyword id="KW-0949">S-adenosyl-L-methionine</keyword>
<keyword id="KW-0808">Transferase</keyword>
<dbReference type="EC" id="2.1.1.297" evidence="1"/>
<dbReference type="EMBL" id="AE001273">
    <property type="protein sequence ID" value="AAC67614.1"/>
    <property type="molecule type" value="Genomic_DNA"/>
</dbReference>
<dbReference type="PIR" id="C71566">
    <property type="entry name" value="C71566"/>
</dbReference>
<dbReference type="RefSeq" id="NP_219526.1">
    <property type="nucleotide sequence ID" value="NC_000117.1"/>
</dbReference>
<dbReference type="RefSeq" id="WP_009871371.1">
    <property type="nucleotide sequence ID" value="NC_000117.1"/>
</dbReference>
<dbReference type="SMR" id="O84027"/>
<dbReference type="FunCoup" id="O84027">
    <property type="interactions" value="262"/>
</dbReference>
<dbReference type="STRING" id="272561.CT_024"/>
<dbReference type="EnsemblBacteria" id="AAC67614">
    <property type="protein sequence ID" value="AAC67614"/>
    <property type="gene ID" value="CT_024"/>
</dbReference>
<dbReference type="GeneID" id="884173"/>
<dbReference type="KEGG" id="ctr:CT_024"/>
<dbReference type="PATRIC" id="fig|272561.5.peg.29"/>
<dbReference type="HOGENOM" id="CLU_018398_3_1_0"/>
<dbReference type="InParanoid" id="O84027"/>
<dbReference type="OrthoDB" id="9784805at2"/>
<dbReference type="Proteomes" id="UP000000431">
    <property type="component" value="Chromosome"/>
</dbReference>
<dbReference type="GO" id="GO:0003676">
    <property type="term" value="F:nucleic acid binding"/>
    <property type="evidence" value="ECO:0007669"/>
    <property type="project" value="InterPro"/>
</dbReference>
<dbReference type="GO" id="GO:0102559">
    <property type="term" value="F:protein-(glutamine-N5) methyltransferase activity"/>
    <property type="evidence" value="ECO:0007669"/>
    <property type="project" value="UniProtKB-EC"/>
</dbReference>
<dbReference type="GO" id="GO:0036009">
    <property type="term" value="F:protein-glutamine N-methyltransferase activity"/>
    <property type="evidence" value="ECO:0000318"/>
    <property type="project" value="GO_Central"/>
</dbReference>
<dbReference type="GO" id="GO:0032259">
    <property type="term" value="P:methylation"/>
    <property type="evidence" value="ECO:0007669"/>
    <property type="project" value="UniProtKB-KW"/>
</dbReference>
<dbReference type="GO" id="GO:0006415">
    <property type="term" value="P:translational termination"/>
    <property type="evidence" value="ECO:0000318"/>
    <property type="project" value="GO_Central"/>
</dbReference>
<dbReference type="CDD" id="cd02440">
    <property type="entry name" value="AdoMet_MTases"/>
    <property type="match status" value="1"/>
</dbReference>
<dbReference type="FunFam" id="3.40.50.150:FF:000053">
    <property type="entry name" value="Release factor glutamine methyltransferase"/>
    <property type="match status" value="1"/>
</dbReference>
<dbReference type="Gene3D" id="1.10.8.10">
    <property type="entry name" value="DNA helicase RuvA subunit, C-terminal domain"/>
    <property type="match status" value="1"/>
</dbReference>
<dbReference type="Gene3D" id="3.40.50.150">
    <property type="entry name" value="Vaccinia Virus protein VP39"/>
    <property type="match status" value="1"/>
</dbReference>
<dbReference type="HAMAP" id="MF_02126">
    <property type="entry name" value="RF_methyltr_PrmC"/>
    <property type="match status" value="1"/>
</dbReference>
<dbReference type="InterPro" id="IPR002052">
    <property type="entry name" value="DNA_methylase_N6_adenine_CS"/>
</dbReference>
<dbReference type="InterPro" id="IPR004556">
    <property type="entry name" value="HemK-like"/>
</dbReference>
<dbReference type="InterPro" id="IPR050320">
    <property type="entry name" value="N5-glutamine_MTase"/>
</dbReference>
<dbReference type="InterPro" id="IPR040758">
    <property type="entry name" value="PrmC_N"/>
</dbReference>
<dbReference type="InterPro" id="IPR019874">
    <property type="entry name" value="RF_methyltr_PrmC"/>
</dbReference>
<dbReference type="InterPro" id="IPR029063">
    <property type="entry name" value="SAM-dependent_MTases_sf"/>
</dbReference>
<dbReference type="InterPro" id="IPR007848">
    <property type="entry name" value="Small_mtfrase_dom"/>
</dbReference>
<dbReference type="NCBIfam" id="TIGR00536">
    <property type="entry name" value="hemK_fam"/>
    <property type="match status" value="1"/>
</dbReference>
<dbReference type="NCBIfam" id="TIGR03534">
    <property type="entry name" value="RF_mod_PrmC"/>
    <property type="match status" value="1"/>
</dbReference>
<dbReference type="PANTHER" id="PTHR18895">
    <property type="entry name" value="HEMK METHYLTRANSFERASE"/>
    <property type="match status" value="1"/>
</dbReference>
<dbReference type="PANTHER" id="PTHR18895:SF74">
    <property type="entry name" value="MTRF1L RELEASE FACTOR GLUTAMINE METHYLTRANSFERASE"/>
    <property type="match status" value="1"/>
</dbReference>
<dbReference type="Pfam" id="PF05175">
    <property type="entry name" value="MTS"/>
    <property type="match status" value="1"/>
</dbReference>
<dbReference type="Pfam" id="PF17827">
    <property type="entry name" value="PrmC_N"/>
    <property type="match status" value="1"/>
</dbReference>
<dbReference type="SUPFAM" id="SSF53335">
    <property type="entry name" value="S-adenosyl-L-methionine-dependent methyltransferases"/>
    <property type="match status" value="1"/>
</dbReference>
<feature type="chain" id="PRO_0000414508" description="Release factor glutamine methyltransferase">
    <location>
        <begin position="1"/>
        <end position="290"/>
    </location>
</feature>
<feature type="binding site" evidence="1">
    <location>
        <position position="140"/>
    </location>
    <ligand>
        <name>S-adenosyl-L-methionine</name>
        <dbReference type="ChEBI" id="CHEBI:59789"/>
    </ligand>
</feature>
<feature type="binding site" evidence="1">
    <location>
        <begin position="181"/>
        <end position="184"/>
    </location>
    <ligand>
        <name>substrate</name>
    </ligand>
</feature>
<feature type="binding site" evidence="1">
    <location>
        <position position="181"/>
    </location>
    <ligand>
        <name>S-adenosyl-L-methionine</name>
        <dbReference type="ChEBI" id="CHEBI:59789"/>
    </ligand>
</feature>
<organism>
    <name type="scientific">Chlamydia trachomatis serovar D (strain ATCC VR-885 / DSM 19411 / UW-3/Cx)</name>
    <dbReference type="NCBI Taxonomy" id="272561"/>
    <lineage>
        <taxon>Bacteria</taxon>
        <taxon>Pseudomonadati</taxon>
        <taxon>Chlamydiota</taxon>
        <taxon>Chlamydiia</taxon>
        <taxon>Chlamydiales</taxon>
        <taxon>Chlamydiaceae</taxon>
        <taxon>Chlamydia/Chlamydophila group</taxon>
        <taxon>Chlamydia</taxon>
    </lineage>
</organism>
<proteinExistence type="inferred from homology"/>
<protein>
    <recommendedName>
        <fullName evidence="1">Release factor glutamine methyltransferase</fullName>
        <shortName evidence="1">RF MTase</shortName>
        <ecNumber evidence="1">2.1.1.297</ecNumber>
    </recommendedName>
    <alternativeName>
        <fullName evidence="1">N5-glutamine methyltransferase PrmC</fullName>
    </alternativeName>
    <alternativeName>
        <fullName evidence="1">Protein-(glutamine-N5) MTase PrmC</fullName>
    </alternativeName>
    <alternativeName>
        <fullName evidence="1">Protein-glutamine N-methyltransferase PrmC</fullName>
    </alternativeName>
</protein>
<name>PRMC_CHLTR</name>